<dbReference type="EC" id="1.18.1.2" evidence="1"/>
<dbReference type="EMBL" id="AM889285">
    <property type="protein sequence ID" value="CAP54654.1"/>
    <property type="status" value="ALT_INIT"/>
    <property type="molecule type" value="Genomic_DNA"/>
</dbReference>
<dbReference type="EMBL" id="CP001189">
    <property type="protein sequence ID" value="ACI51081.1"/>
    <property type="molecule type" value="Genomic_DNA"/>
</dbReference>
<dbReference type="RefSeq" id="WP_012553701.1">
    <property type="nucleotide sequence ID" value="NC_010125.1"/>
</dbReference>
<dbReference type="SMR" id="A9H9C9"/>
<dbReference type="STRING" id="272568.GDI0711"/>
<dbReference type="KEGG" id="gdi:GDI0711"/>
<dbReference type="KEGG" id="gdj:Gdia_1299"/>
<dbReference type="eggNOG" id="COG0492">
    <property type="taxonomic scope" value="Bacteria"/>
</dbReference>
<dbReference type="HOGENOM" id="CLU_031864_5_5_5"/>
<dbReference type="OrthoDB" id="9806179at2"/>
<dbReference type="Proteomes" id="UP000001176">
    <property type="component" value="Chromosome"/>
</dbReference>
<dbReference type="GO" id="GO:0004324">
    <property type="term" value="F:ferredoxin-NADP+ reductase activity"/>
    <property type="evidence" value="ECO:0007669"/>
    <property type="project" value="UniProtKB-UniRule"/>
</dbReference>
<dbReference type="GO" id="GO:0050660">
    <property type="term" value="F:flavin adenine dinucleotide binding"/>
    <property type="evidence" value="ECO:0007669"/>
    <property type="project" value="UniProtKB-UniRule"/>
</dbReference>
<dbReference type="GO" id="GO:0050661">
    <property type="term" value="F:NADP binding"/>
    <property type="evidence" value="ECO:0007669"/>
    <property type="project" value="UniProtKB-UniRule"/>
</dbReference>
<dbReference type="Gene3D" id="3.50.50.60">
    <property type="entry name" value="FAD/NAD(P)-binding domain"/>
    <property type="match status" value="2"/>
</dbReference>
<dbReference type="HAMAP" id="MF_01685">
    <property type="entry name" value="FENR2"/>
    <property type="match status" value="1"/>
</dbReference>
<dbReference type="InterPro" id="IPR036188">
    <property type="entry name" value="FAD/NAD-bd_sf"/>
</dbReference>
<dbReference type="InterPro" id="IPR023753">
    <property type="entry name" value="FAD/NAD-binding_dom"/>
</dbReference>
<dbReference type="InterPro" id="IPR022890">
    <property type="entry name" value="Fd--NADP_Rdtase_type_2"/>
</dbReference>
<dbReference type="InterPro" id="IPR050097">
    <property type="entry name" value="Ferredoxin-NADP_redctase_2"/>
</dbReference>
<dbReference type="PANTHER" id="PTHR48105">
    <property type="entry name" value="THIOREDOXIN REDUCTASE 1-RELATED-RELATED"/>
    <property type="match status" value="1"/>
</dbReference>
<dbReference type="Pfam" id="PF07992">
    <property type="entry name" value="Pyr_redox_2"/>
    <property type="match status" value="1"/>
</dbReference>
<dbReference type="PRINTS" id="PR00368">
    <property type="entry name" value="FADPNR"/>
</dbReference>
<dbReference type="PRINTS" id="PR00469">
    <property type="entry name" value="PNDRDTASEII"/>
</dbReference>
<dbReference type="SUPFAM" id="SSF51905">
    <property type="entry name" value="FAD/NAD(P)-binding domain"/>
    <property type="match status" value="1"/>
</dbReference>
<feature type="chain" id="PRO_0000364842" description="Ferredoxin--NADP reductase">
    <location>
        <begin position="1"/>
        <end position="341"/>
    </location>
</feature>
<feature type="binding site" evidence="1">
    <location>
        <position position="38"/>
    </location>
    <ligand>
        <name>FAD</name>
        <dbReference type="ChEBI" id="CHEBI:57692"/>
    </ligand>
</feature>
<feature type="binding site" evidence="1">
    <location>
        <position position="46"/>
    </location>
    <ligand>
        <name>FAD</name>
        <dbReference type="ChEBI" id="CHEBI:57692"/>
    </ligand>
</feature>
<feature type="binding site" evidence="1">
    <location>
        <position position="51"/>
    </location>
    <ligand>
        <name>FAD</name>
        <dbReference type="ChEBI" id="CHEBI:57692"/>
    </ligand>
</feature>
<feature type="binding site" evidence="1">
    <location>
        <position position="91"/>
    </location>
    <ligand>
        <name>FAD</name>
        <dbReference type="ChEBI" id="CHEBI:57692"/>
    </ligand>
</feature>
<feature type="binding site" evidence="1">
    <location>
        <position position="125"/>
    </location>
    <ligand>
        <name>FAD</name>
        <dbReference type="ChEBI" id="CHEBI:57692"/>
    </ligand>
</feature>
<feature type="binding site" evidence="1">
    <location>
        <position position="292"/>
    </location>
    <ligand>
        <name>FAD</name>
        <dbReference type="ChEBI" id="CHEBI:57692"/>
    </ligand>
</feature>
<feature type="binding site" evidence="1">
    <location>
        <position position="333"/>
    </location>
    <ligand>
        <name>FAD</name>
        <dbReference type="ChEBI" id="CHEBI:57692"/>
    </ligand>
</feature>
<reference key="1">
    <citation type="journal article" date="2009" name="BMC Genomics">
        <title>Complete genome sequence of the sugarcane nitrogen-fixing endophyte Gluconacetobacter diazotrophicus Pal5.</title>
        <authorList>
            <person name="Bertalan M."/>
            <person name="Albano R."/>
            <person name="de Padua V."/>
            <person name="Rouws L."/>
            <person name="Rojas C."/>
            <person name="Hemerly A."/>
            <person name="Teixeira K."/>
            <person name="Schwab S."/>
            <person name="Araujo J."/>
            <person name="Oliveira A."/>
            <person name="Franca L."/>
            <person name="Magalhaes V."/>
            <person name="Alqueres S."/>
            <person name="Cardoso A."/>
            <person name="Almeida W."/>
            <person name="Loureiro M.M."/>
            <person name="Nogueira E."/>
            <person name="Cidade D."/>
            <person name="Oliveira D."/>
            <person name="Simao T."/>
            <person name="Macedo J."/>
            <person name="Valadao A."/>
            <person name="Dreschsel M."/>
            <person name="Freitas F."/>
            <person name="Vidal M."/>
            <person name="Guedes H."/>
            <person name="Rodrigues E."/>
            <person name="Meneses C."/>
            <person name="Brioso P."/>
            <person name="Pozzer L."/>
            <person name="Figueiredo D."/>
            <person name="Montano H."/>
            <person name="Junior J."/>
            <person name="de Souza Filho G."/>
            <person name="Martin Quintana Flores V."/>
            <person name="Ferreira B."/>
            <person name="Branco A."/>
            <person name="Gonzalez P."/>
            <person name="Guillobel H."/>
            <person name="Lemos M."/>
            <person name="Seibel L."/>
            <person name="Macedo J."/>
            <person name="Alves-Ferreira M."/>
            <person name="Sachetto-Martins G."/>
            <person name="Coelho A."/>
            <person name="Santos E."/>
            <person name="Amaral G."/>
            <person name="Neves A."/>
            <person name="Pacheco A.B."/>
            <person name="Carvalho D."/>
            <person name="Lery L."/>
            <person name="Bisch P."/>
            <person name="Rossle S.C."/>
            <person name="Urmenyi T."/>
            <person name="Rael Pereira A."/>
            <person name="Silva R."/>
            <person name="Rondinelli E."/>
            <person name="von Kruger W."/>
            <person name="Martins O."/>
            <person name="Baldani J.I."/>
            <person name="Ferreira P.C."/>
        </authorList>
    </citation>
    <scope>NUCLEOTIDE SEQUENCE [LARGE SCALE GENOMIC DNA]</scope>
    <source>
        <strain>ATCC 49037 / DSM 5601 / CCUG 37298 / CIP 103539 / LMG 7603 / PAl5</strain>
    </source>
</reference>
<reference key="2">
    <citation type="journal article" date="2010" name="Stand. Genomic Sci.">
        <title>Two genome sequences of the same bacterial strain, Gluconacetobacter diazotrophicus PAl 5, suggest a new standard in genome sequence submission.</title>
        <authorList>
            <person name="Giongo A."/>
            <person name="Tyler H.L."/>
            <person name="Zipperer U.N."/>
            <person name="Triplett E.W."/>
        </authorList>
    </citation>
    <scope>NUCLEOTIDE SEQUENCE [LARGE SCALE GENOMIC DNA]</scope>
    <source>
        <strain>ATCC 49037 / DSM 5601 / CCUG 37298 / CIP 103539 / LMG 7603 / PAl5</strain>
    </source>
</reference>
<name>FENR_GLUDA</name>
<organism>
    <name type="scientific">Gluconacetobacter diazotrophicus (strain ATCC 49037 / DSM 5601 / CCUG 37298 / CIP 103539 / LMG 7603 / PAl5)</name>
    <dbReference type="NCBI Taxonomy" id="272568"/>
    <lineage>
        <taxon>Bacteria</taxon>
        <taxon>Pseudomonadati</taxon>
        <taxon>Pseudomonadota</taxon>
        <taxon>Alphaproteobacteria</taxon>
        <taxon>Acetobacterales</taxon>
        <taxon>Acetobacteraceae</taxon>
        <taxon>Gluconacetobacter</taxon>
    </lineage>
</organism>
<proteinExistence type="inferred from homology"/>
<keyword id="KW-0274">FAD</keyword>
<keyword id="KW-0285">Flavoprotein</keyword>
<keyword id="KW-0521">NADP</keyword>
<keyword id="KW-0560">Oxidoreductase</keyword>
<keyword id="KW-1185">Reference proteome</keyword>
<evidence type="ECO:0000255" key="1">
    <source>
        <dbReference type="HAMAP-Rule" id="MF_01685"/>
    </source>
</evidence>
<evidence type="ECO:0000305" key="2"/>
<sequence length="341" mass="36053">MTDAPTLTTDVAIIGAGPAGLFAAFECGMLKLDSLLIDALDCVGGQCAALYPEKPIYDIPGHPAIAGAALIEGLEQQIAPFDVPRLLGRRVERLSGHRGAFTLGTDRGETIHARAVIIAAGAGAFGPNRPPLAGLDGFEATGAVQYYVRRRADFAGTRIVIAGGGDSAIDWALALKDEAEKIWLVHRRDRFRAAPESLRQLDEAVAAGRIEKIVPYQLHGLRGTDGALEGVEVATLDGDTRILPADRLLPFFGLSTDLGPIAHWGMDSIRSTIPVVPSSCETTLPGVFAVGDVAAYPGKLKLILQGFSEGAMAAHAIHPIVRPDTALHFEYSTSKGVPDRI</sequence>
<protein>
    <recommendedName>
        <fullName evidence="1">Ferredoxin--NADP reductase</fullName>
        <shortName evidence="1">FNR</shortName>
        <shortName evidence="1">Fd-NADP(+) reductase</shortName>
        <ecNumber evidence="1">1.18.1.2</ecNumber>
    </recommendedName>
</protein>
<comment type="catalytic activity">
    <reaction evidence="1">
        <text>2 reduced [2Fe-2S]-[ferredoxin] + NADP(+) + H(+) = 2 oxidized [2Fe-2S]-[ferredoxin] + NADPH</text>
        <dbReference type="Rhea" id="RHEA:20125"/>
        <dbReference type="Rhea" id="RHEA-COMP:10000"/>
        <dbReference type="Rhea" id="RHEA-COMP:10001"/>
        <dbReference type="ChEBI" id="CHEBI:15378"/>
        <dbReference type="ChEBI" id="CHEBI:33737"/>
        <dbReference type="ChEBI" id="CHEBI:33738"/>
        <dbReference type="ChEBI" id="CHEBI:57783"/>
        <dbReference type="ChEBI" id="CHEBI:58349"/>
        <dbReference type="EC" id="1.18.1.2"/>
    </reaction>
</comment>
<comment type="cofactor">
    <cofactor evidence="1">
        <name>FAD</name>
        <dbReference type="ChEBI" id="CHEBI:57692"/>
    </cofactor>
    <text evidence="1">Binds 1 FAD per subunit.</text>
</comment>
<comment type="subunit">
    <text evidence="1">Homodimer.</text>
</comment>
<comment type="similarity">
    <text evidence="1">Belongs to the ferredoxin--NADP reductase type 2 family.</text>
</comment>
<comment type="sequence caution" evidence="2">
    <conflict type="erroneous initiation">
        <sequence resource="EMBL-CDS" id="CAP54654"/>
    </conflict>
</comment>
<accession>A9H9C9</accession>
<accession>B5ZHK1</accession>
<gene>
    <name type="ordered locus">GDI0711</name>
    <name type="ordered locus">Gdia_1299</name>
</gene>